<proteinExistence type="evidence at protein level"/>
<accession>P94529</accession>
<accession>O05094</accession>
<sequence>MKPVKTGTVHPVPSAAKQSGWRDLFYSKKAAPYLFTAPFVLSFLVFFLYPIISVFIMSFQRILPGEVSFVGLSNYTALNNPTFYTALWNTLEYTFWTLIVLIPVPLLLAIFLNSKLVKFRNIFKSALFIPALTSTIVAGIIFRLIFGEMETSLANSILLKLGFSPQNWMNNEHTGMFLMVLLASWRWMGINILYFLAGLQNVPKELYEAADIDGANTMKKFLHITLPFLKPVTVYVLTISIIGGFRMFEESYVLWQNNSPGNIGLTLVGYLYQQGLAYNEMGYGAAIGIVLLIVILVVSLISLKLSGSFKGEG</sequence>
<comment type="function">
    <text evidence="3 8">Part of the ABC transporter complex AraNPQ involved in the uptake of arabinooligosaccharides. Transports alpha-1,5-arabinooligosaccharides, at least up to four L-arabinosyl units (PubMed:20693325). Responsible for the translocation of the substrate across the membrane (Probable).</text>
</comment>
<comment type="subunit">
    <text evidence="3">The complex is composed of two ATP-binding proteins (MsmX), two transmembrane proteins (AraP and AraQ) and a solute-binding protein (AraN).</text>
</comment>
<comment type="subcellular location">
    <subcellularLocation>
        <location evidence="7">Cell membrane</location>
        <topology evidence="7">Multi-pass membrane protein</topology>
    </subcellularLocation>
</comment>
<comment type="induction">
    <text evidence="2 5">Transcription is repressed by glucose and by the binding of AraR to the operon promoter. L-arabinose acts as an inducer by inhibiting the binding of AraR to the DNA, thus allowing expression of the gene.</text>
</comment>
<comment type="similarity">
    <text evidence="7">Belongs to the binding-protein-dependent transport system permease family. MalFG subfamily.</text>
</comment>
<evidence type="ECO:0000255" key="1">
    <source>
        <dbReference type="PROSITE-ProRule" id="PRU00441"/>
    </source>
</evidence>
<evidence type="ECO:0000269" key="2">
    <source>
    </source>
</evidence>
<evidence type="ECO:0000269" key="3">
    <source>
    </source>
</evidence>
<evidence type="ECO:0000269" key="4">
    <source>
    </source>
</evidence>
<evidence type="ECO:0000269" key="5">
    <source>
    </source>
</evidence>
<evidence type="ECO:0000303" key="6">
    <source>
    </source>
</evidence>
<evidence type="ECO:0000305" key="7"/>
<evidence type="ECO:0000305" key="8">
    <source>
    </source>
</evidence>
<organism>
    <name type="scientific">Bacillus subtilis (strain 168)</name>
    <dbReference type="NCBI Taxonomy" id="224308"/>
    <lineage>
        <taxon>Bacteria</taxon>
        <taxon>Bacillati</taxon>
        <taxon>Bacillota</taxon>
        <taxon>Bacilli</taxon>
        <taxon>Bacillales</taxon>
        <taxon>Bacillaceae</taxon>
        <taxon>Bacillus</taxon>
    </lineage>
</organism>
<gene>
    <name evidence="6" type="primary">araP</name>
    <name type="synonym">yseD</name>
    <name type="ordered locus">BSU28740</name>
</gene>
<feature type="chain" id="PRO_0000059954" description="Arabinooligosaccharides transport system permease protein AraP">
    <location>
        <begin position="1"/>
        <end position="313"/>
    </location>
</feature>
<feature type="transmembrane region" description="Helical" evidence="1">
    <location>
        <begin position="39"/>
        <end position="59"/>
    </location>
</feature>
<feature type="transmembrane region" description="Helical" evidence="1">
    <location>
        <begin position="91"/>
        <end position="111"/>
    </location>
</feature>
<feature type="transmembrane region" description="Helical" evidence="1">
    <location>
        <begin position="126"/>
        <end position="146"/>
    </location>
</feature>
<feature type="transmembrane region" description="Helical" evidence="1">
    <location>
        <begin position="176"/>
        <end position="196"/>
    </location>
</feature>
<feature type="transmembrane region" description="Helical" evidence="1">
    <location>
        <begin position="224"/>
        <end position="244"/>
    </location>
</feature>
<feature type="transmembrane region" description="Helical" evidence="1">
    <location>
        <begin position="281"/>
        <end position="301"/>
    </location>
</feature>
<feature type="domain" description="ABC transmembrane type-1" evidence="1">
    <location>
        <begin position="87"/>
        <end position="302"/>
    </location>
</feature>
<feature type="mutagenesis site" description="Has no effect on the growth rate." evidence="4">
    <original>E</original>
    <variation>A</variation>
    <location>
        <position position="205"/>
    </location>
</feature>
<feature type="mutagenesis site" description="Small negative impact in the uptake of arabinotriose. Shows an increase of about 10% in the doubling time." evidence="4">
    <original>E</original>
    <variation>A</variation>
    <location>
        <position position="208"/>
    </location>
</feature>
<feature type="mutagenesis site" description="Severely impairs the uptake of arabinotriose. Shows a 3.6-fold increase of the doubling time." evidence="4">
    <original>D</original>
    <variation>A</variation>
    <location>
        <position position="213"/>
    </location>
</feature>
<feature type="sequence conflict" description="In Ref. 1; CAA61935." evidence="7" ref="1">
    <original>R</original>
    <variation>K</variation>
    <location>
        <position position="186"/>
    </location>
</feature>
<dbReference type="EMBL" id="X89810">
    <property type="protein sequence ID" value="CAA61935.1"/>
    <property type="molecule type" value="Genomic_DNA"/>
</dbReference>
<dbReference type="EMBL" id="Z75208">
    <property type="protein sequence ID" value="CAA99593.1"/>
    <property type="molecule type" value="Genomic_DNA"/>
</dbReference>
<dbReference type="EMBL" id="AL009126">
    <property type="protein sequence ID" value="CAB14834.1"/>
    <property type="molecule type" value="Genomic_DNA"/>
</dbReference>
<dbReference type="PIR" id="B69588">
    <property type="entry name" value="B69588"/>
</dbReference>
<dbReference type="RefSeq" id="NP_390752.1">
    <property type="nucleotide sequence ID" value="NC_000964.3"/>
</dbReference>
<dbReference type="RefSeq" id="WP_003229507.1">
    <property type="nucleotide sequence ID" value="NZ_OZ025638.1"/>
</dbReference>
<dbReference type="SMR" id="P94529"/>
<dbReference type="FunCoup" id="P94529">
    <property type="interactions" value="219"/>
</dbReference>
<dbReference type="STRING" id="224308.BSU28740"/>
<dbReference type="TCDB" id="3.A.1.1.34">
    <property type="family name" value="the atp-binding cassette (abc) superfamily"/>
</dbReference>
<dbReference type="PaxDb" id="224308-BSU28740"/>
<dbReference type="EnsemblBacteria" id="CAB14834">
    <property type="protein sequence ID" value="CAB14834"/>
    <property type="gene ID" value="BSU_28740"/>
</dbReference>
<dbReference type="GeneID" id="937432"/>
<dbReference type="KEGG" id="bsu:BSU28740"/>
<dbReference type="PATRIC" id="fig|224308.179.peg.3122"/>
<dbReference type="eggNOG" id="COG1175">
    <property type="taxonomic scope" value="Bacteria"/>
</dbReference>
<dbReference type="InParanoid" id="P94529"/>
<dbReference type="OrthoDB" id="9785347at2"/>
<dbReference type="PhylomeDB" id="P94529"/>
<dbReference type="BioCyc" id="BSUB:BSU28740-MONOMER"/>
<dbReference type="Proteomes" id="UP000001570">
    <property type="component" value="Chromosome"/>
</dbReference>
<dbReference type="GO" id="GO:0005886">
    <property type="term" value="C:plasma membrane"/>
    <property type="evidence" value="ECO:0007669"/>
    <property type="project" value="UniProtKB-SubCell"/>
</dbReference>
<dbReference type="GO" id="GO:0055085">
    <property type="term" value="P:transmembrane transport"/>
    <property type="evidence" value="ECO:0007669"/>
    <property type="project" value="InterPro"/>
</dbReference>
<dbReference type="CDD" id="cd06261">
    <property type="entry name" value="TM_PBP2"/>
    <property type="match status" value="1"/>
</dbReference>
<dbReference type="Gene3D" id="1.10.3720.10">
    <property type="entry name" value="MetI-like"/>
    <property type="match status" value="1"/>
</dbReference>
<dbReference type="InterPro" id="IPR000515">
    <property type="entry name" value="MetI-like"/>
</dbReference>
<dbReference type="InterPro" id="IPR035906">
    <property type="entry name" value="MetI-like_sf"/>
</dbReference>
<dbReference type="InterPro" id="IPR050809">
    <property type="entry name" value="UgpAE/MalFG_permease"/>
</dbReference>
<dbReference type="PANTHER" id="PTHR43227:SF7">
    <property type="entry name" value="ARABINOOLIGOSACCHARIDES TRANSPORT SYSTEM PERMEASE PROTEIN ARAP"/>
    <property type="match status" value="1"/>
</dbReference>
<dbReference type="PANTHER" id="PTHR43227">
    <property type="entry name" value="BLL4140 PROTEIN"/>
    <property type="match status" value="1"/>
</dbReference>
<dbReference type="Pfam" id="PF00528">
    <property type="entry name" value="BPD_transp_1"/>
    <property type="match status" value="1"/>
</dbReference>
<dbReference type="SUPFAM" id="SSF161098">
    <property type="entry name" value="MetI-like"/>
    <property type="match status" value="1"/>
</dbReference>
<dbReference type="PROSITE" id="PS50928">
    <property type="entry name" value="ABC_TM1"/>
    <property type="match status" value="1"/>
</dbReference>
<name>ARAP_BACSU</name>
<reference key="1">
    <citation type="journal article" date="1997" name="Microbiology">
        <title>The Bacillus subtilis L-arabinose (ara) operon: nucleotide sequence, genetic organization and expression.</title>
        <authorList>
            <person name="Sa-Nogueira I.M.G."/>
            <person name="Nogueira T.V."/>
            <person name="Soares S."/>
            <person name="de Lencastre H."/>
        </authorList>
    </citation>
    <scope>NUCLEOTIDE SEQUENCE [GENOMIC DNA]</scope>
    <scope>TRANSCRIPTIONAL REGULATION</scope>
    <source>
        <strain>168</strain>
    </source>
</reference>
<reference key="2">
    <citation type="journal article" date="1996" name="Microbiology">
        <title>The dnaB-pheA (256 degrees-240 degrees) region of the Bacillus subtilis chromosome containing genes responsible for stress responses, the utilization of plant cell walls and primary metabolism.</title>
        <authorList>
            <person name="Wipat A."/>
            <person name="Carter N."/>
            <person name="Brignell C.S."/>
            <person name="Guy J.B."/>
            <person name="Piper K."/>
            <person name="Sanders J."/>
            <person name="Emmerson P.T."/>
            <person name="Harwood C.R."/>
        </authorList>
    </citation>
    <scope>NUCLEOTIDE SEQUENCE [GENOMIC DNA]</scope>
    <source>
        <strain>168</strain>
    </source>
</reference>
<reference key="3">
    <citation type="journal article" date="1997" name="Nature">
        <title>The complete genome sequence of the Gram-positive bacterium Bacillus subtilis.</title>
        <authorList>
            <person name="Kunst F."/>
            <person name="Ogasawara N."/>
            <person name="Moszer I."/>
            <person name="Albertini A.M."/>
            <person name="Alloni G."/>
            <person name="Azevedo V."/>
            <person name="Bertero M.G."/>
            <person name="Bessieres P."/>
            <person name="Bolotin A."/>
            <person name="Borchert S."/>
            <person name="Borriss R."/>
            <person name="Boursier L."/>
            <person name="Brans A."/>
            <person name="Braun M."/>
            <person name="Brignell S.C."/>
            <person name="Bron S."/>
            <person name="Brouillet S."/>
            <person name="Bruschi C.V."/>
            <person name="Caldwell B."/>
            <person name="Capuano V."/>
            <person name="Carter N.M."/>
            <person name="Choi S.-K."/>
            <person name="Codani J.-J."/>
            <person name="Connerton I.F."/>
            <person name="Cummings N.J."/>
            <person name="Daniel R.A."/>
            <person name="Denizot F."/>
            <person name="Devine K.M."/>
            <person name="Duesterhoeft A."/>
            <person name="Ehrlich S.D."/>
            <person name="Emmerson P.T."/>
            <person name="Entian K.-D."/>
            <person name="Errington J."/>
            <person name="Fabret C."/>
            <person name="Ferrari E."/>
            <person name="Foulger D."/>
            <person name="Fritz C."/>
            <person name="Fujita M."/>
            <person name="Fujita Y."/>
            <person name="Fuma S."/>
            <person name="Galizzi A."/>
            <person name="Galleron N."/>
            <person name="Ghim S.-Y."/>
            <person name="Glaser P."/>
            <person name="Goffeau A."/>
            <person name="Golightly E.J."/>
            <person name="Grandi G."/>
            <person name="Guiseppi G."/>
            <person name="Guy B.J."/>
            <person name="Haga K."/>
            <person name="Haiech J."/>
            <person name="Harwood C.R."/>
            <person name="Henaut A."/>
            <person name="Hilbert H."/>
            <person name="Holsappel S."/>
            <person name="Hosono S."/>
            <person name="Hullo M.-F."/>
            <person name="Itaya M."/>
            <person name="Jones L.-M."/>
            <person name="Joris B."/>
            <person name="Karamata D."/>
            <person name="Kasahara Y."/>
            <person name="Klaerr-Blanchard M."/>
            <person name="Klein C."/>
            <person name="Kobayashi Y."/>
            <person name="Koetter P."/>
            <person name="Koningstein G."/>
            <person name="Krogh S."/>
            <person name="Kumano M."/>
            <person name="Kurita K."/>
            <person name="Lapidus A."/>
            <person name="Lardinois S."/>
            <person name="Lauber J."/>
            <person name="Lazarevic V."/>
            <person name="Lee S.-M."/>
            <person name="Levine A."/>
            <person name="Liu H."/>
            <person name="Masuda S."/>
            <person name="Mauel C."/>
            <person name="Medigue C."/>
            <person name="Medina N."/>
            <person name="Mellado R.P."/>
            <person name="Mizuno M."/>
            <person name="Moestl D."/>
            <person name="Nakai S."/>
            <person name="Noback M."/>
            <person name="Noone D."/>
            <person name="O'Reilly M."/>
            <person name="Ogawa K."/>
            <person name="Ogiwara A."/>
            <person name="Oudega B."/>
            <person name="Park S.-H."/>
            <person name="Parro V."/>
            <person name="Pohl T.M."/>
            <person name="Portetelle D."/>
            <person name="Porwollik S."/>
            <person name="Prescott A.M."/>
            <person name="Presecan E."/>
            <person name="Pujic P."/>
            <person name="Purnelle B."/>
            <person name="Rapoport G."/>
            <person name="Rey M."/>
            <person name="Reynolds S."/>
            <person name="Rieger M."/>
            <person name="Rivolta C."/>
            <person name="Rocha E."/>
            <person name="Roche B."/>
            <person name="Rose M."/>
            <person name="Sadaie Y."/>
            <person name="Sato T."/>
            <person name="Scanlan E."/>
            <person name="Schleich S."/>
            <person name="Schroeter R."/>
            <person name="Scoffone F."/>
            <person name="Sekiguchi J."/>
            <person name="Sekowska A."/>
            <person name="Seror S.J."/>
            <person name="Serror P."/>
            <person name="Shin B.-S."/>
            <person name="Soldo B."/>
            <person name="Sorokin A."/>
            <person name="Tacconi E."/>
            <person name="Takagi T."/>
            <person name="Takahashi H."/>
            <person name="Takemaru K."/>
            <person name="Takeuchi M."/>
            <person name="Tamakoshi A."/>
            <person name="Tanaka T."/>
            <person name="Terpstra P."/>
            <person name="Tognoni A."/>
            <person name="Tosato V."/>
            <person name="Uchiyama S."/>
            <person name="Vandenbol M."/>
            <person name="Vannier F."/>
            <person name="Vassarotti A."/>
            <person name="Viari A."/>
            <person name="Wambutt R."/>
            <person name="Wedler E."/>
            <person name="Wedler H."/>
            <person name="Weitzenegger T."/>
            <person name="Winters P."/>
            <person name="Wipat A."/>
            <person name="Yamamoto H."/>
            <person name="Yamane K."/>
            <person name="Yasumoto K."/>
            <person name="Yata K."/>
            <person name="Yoshida K."/>
            <person name="Yoshikawa H.-F."/>
            <person name="Zumstein E."/>
            <person name="Yoshikawa H."/>
            <person name="Danchin A."/>
        </authorList>
    </citation>
    <scope>NUCLEOTIDE SEQUENCE [LARGE SCALE GENOMIC DNA]</scope>
    <source>
        <strain>168</strain>
    </source>
</reference>
<reference key="4">
    <citation type="journal article" date="1999" name="Mol. Microbiol.">
        <title>Mode of action of AraR, the key regulator of L-arabinose metabolism in Bacillus subtilis.</title>
        <authorList>
            <person name="Mota L.J."/>
            <person name="Tavares P."/>
            <person name="Sa-Nogueira I.M.G."/>
        </authorList>
    </citation>
    <scope>TRANSCRIPTIONAL REGULATION</scope>
</reference>
<reference key="5">
    <citation type="journal article" date="2010" name="J. Bacteriol.">
        <title>A multitask ATPase serving different ABC-type sugar importers in Bacillus subtilis.</title>
        <authorList>
            <person name="Ferreira M.J."/>
            <person name="Sa-Nogueira I.D."/>
        </authorList>
    </citation>
    <scope>FUNCTION</scope>
    <scope>SUBUNIT</scope>
</reference>
<reference key="6">
    <citation type="journal article" date="2017" name="PLoS ONE">
        <title>The MsmX ATPase plays a crucial role in pectin mobilization by Bacillus subtilis.</title>
        <authorList>
            <person name="Ferreira M.J."/>
            <person name="Mendes A.L."/>
            <person name="de Sa-Nogueira I."/>
        </authorList>
    </citation>
    <scope>MUTAGENESIS OF GLU-205; GLU-208 AND ASP-213</scope>
</reference>
<protein>
    <recommendedName>
        <fullName evidence="7">Arabinooligosaccharides transport system permease protein AraP</fullName>
    </recommendedName>
</protein>
<keyword id="KW-1003">Cell membrane</keyword>
<keyword id="KW-0472">Membrane</keyword>
<keyword id="KW-1185">Reference proteome</keyword>
<keyword id="KW-0762">Sugar transport</keyword>
<keyword id="KW-0812">Transmembrane</keyword>
<keyword id="KW-1133">Transmembrane helix</keyword>
<keyword id="KW-0813">Transport</keyword>